<accession>A8A337</accession>
<keyword id="KW-0001">2Fe-2S</keyword>
<keyword id="KW-0010">Activator</keyword>
<keyword id="KW-0238">DNA-binding</keyword>
<keyword id="KW-0408">Iron</keyword>
<keyword id="KW-0411">Iron-sulfur</keyword>
<keyword id="KW-0479">Metal-binding</keyword>
<keyword id="KW-0678">Repressor</keyword>
<keyword id="KW-0804">Transcription</keyword>
<keyword id="KW-0805">Transcription regulation</keyword>
<organism>
    <name type="scientific">Escherichia coli O9:H4 (strain HS)</name>
    <dbReference type="NCBI Taxonomy" id="331112"/>
    <lineage>
        <taxon>Bacteria</taxon>
        <taxon>Pseudomonadati</taxon>
        <taxon>Pseudomonadota</taxon>
        <taxon>Gammaproteobacteria</taxon>
        <taxon>Enterobacterales</taxon>
        <taxon>Enterobacteriaceae</taxon>
        <taxon>Escherichia</taxon>
    </lineage>
</organism>
<proteinExistence type="inferred from homology"/>
<name>ISCR_ECOHS</name>
<sequence length="162" mass="17349">MRLTSKGRYAVTAMLDVALNSEAGPVPLADISERQGISLSYLEQLFSRLRKNGLVSSVRGPGGGYLLGKDASSIAVGEVISAVDESVDATRCQGKGGCQGGDKCLTHALWRDLSDRLTGFLNNITLGELVNNQEVLDVSGRQHTHDAPRTRIQDAIDVKLRA</sequence>
<reference key="1">
    <citation type="journal article" date="2008" name="J. Bacteriol.">
        <title>The pangenome structure of Escherichia coli: comparative genomic analysis of E. coli commensal and pathogenic isolates.</title>
        <authorList>
            <person name="Rasko D.A."/>
            <person name="Rosovitz M.J."/>
            <person name="Myers G.S.A."/>
            <person name="Mongodin E.F."/>
            <person name="Fricke W.F."/>
            <person name="Gajer P."/>
            <person name="Crabtree J."/>
            <person name="Sebaihia M."/>
            <person name="Thomson N.R."/>
            <person name="Chaudhuri R."/>
            <person name="Henderson I.R."/>
            <person name="Sperandio V."/>
            <person name="Ravel J."/>
        </authorList>
    </citation>
    <scope>NUCLEOTIDE SEQUENCE [LARGE SCALE GENOMIC DNA]</scope>
    <source>
        <strain>HS</strain>
    </source>
</reference>
<evidence type="ECO:0000255" key="1">
    <source>
        <dbReference type="HAMAP-Rule" id="MF_01176"/>
    </source>
</evidence>
<protein>
    <recommendedName>
        <fullName evidence="1">HTH-type transcriptional regulator IscR</fullName>
    </recommendedName>
</protein>
<dbReference type="EMBL" id="CP000802">
    <property type="protein sequence ID" value="ABV06941.1"/>
    <property type="molecule type" value="Genomic_DNA"/>
</dbReference>
<dbReference type="RefSeq" id="WP_001241356.1">
    <property type="nucleotide sequence ID" value="NC_009800.1"/>
</dbReference>
<dbReference type="SMR" id="A8A337"/>
<dbReference type="GeneID" id="93774605"/>
<dbReference type="KEGG" id="ecx:EcHS_A2682"/>
<dbReference type="HOGENOM" id="CLU_107144_0_0_6"/>
<dbReference type="GO" id="GO:0005829">
    <property type="term" value="C:cytosol"/>
    <property type="evidence" value="ECO:0007669"/>
    <property type="project" value="TreeGrafter"/>
</dbReference>
<dbReference type="GO" id="GO:0051537">
    <property type="term" value="F:2 iron, 2 sulfur cluster binding"/>
    <property type="evidence" value="ECO:0007669"/>
    <property type="project" value="UniProtKB-KW"/>
</dbReference>
<dbReference type="GO" id="GO:0003700">
    <property type="term" value="F:DNA-binding transcription factor activity"/>
    <property type="evidence" value="ECO:0007669"/>
    <property type="project" value="UniProtKB-UniRule"/>
</dbReference>
<dbReference type="GO" id="GO:0003690">
    <property type="term" value="F:double-stranded DNA binding"/>
    <property type="evidence" value="ECO:0007669"/>
    <property type="project" value="UniProtKB-UniRule"/>
</dbReference>
<dbReference type="GO" id="GO:0005506">
    <property type="term" value="F:iron ion binding"/>
    <property type="evidence" value="ECO:0007669"/>
    <property type="project" value="UniProtKB-UniRule"/>
</dbReference>
<dbReference type="FunFam" id="1.10.10.10:FF:000026">
    <property type="entry name" value="HTH-type transcriptional regulator IscR"/>
    <property type="match status" value="1"/>
</dbReference>
<dbReference type="Gene3D" id="1.10.10.10">
    <property type="entry name" value="Winged helix-like DNA-binding domain superfamily/Winged helix DNA-binding domain"/>
    <property type="match status" value="1"/>
</dbReference>
<dbReference type="HAMAP" id="MF_01176">
    <property type="entry name" value="HTH_type_IscR"/>
    <property type="match status" value="1"/>
</dbReference>
<dbReference type="InterPro" id="IPR010242">
    <property type="entry name" value="TF_HTH_IscR"/>
</dbReference>
<dbReference type="InterPro" id="IPR030489">
    <property type="entry name" value="TR_Rrf2-type_CS"/>
</dbReference>
<dbReference type="InterPro" id="IPR000944">
    <property type="entry name" value="Tscrpt_reg_Rrf2"/>
</dbReference>
<dbReference type="InterPro" id="IPR036388">
    <property type="entry name" value="WH-like_DNA-bd_sf"/>
</dbReference>
<dbReference type="InterPro" id="IPR036390">
    <property type="entry name" value="WH_DNA-bd_sf"/>
</dbReference>
<dbReference type="NCBIfam" id="TIGR02010">
    <property type="entry name" value="IscR"/>
    <property type="match status" value="1"/>
</dbReference>
<dbReference type="NCBIfam" id="NF008110">
    <property type="entry name" value="PRK10857.1"/>
    <property type="match status" value="1"/>
</dbReference>
<dbReference type="NCBIfam" id="TIGR00738">
    <property type="entry name" value="rrf2_super"/>
    <property type="match status" value="1"/>
</dbReference>
<dbReference type="PANTHER" id="PTHR33221:SF5">
    <property type="entry name" value="HTH-TYPE TRANSCRIPTIONAL REGULATOR ISCR"/>
    <property type="match status" value="1"/>
</dbReference>
<dbReference type="PANTHER" id="PTHR33221">
    <property type="entry name" value="WINGED HELIX-TURN-HELIX TRANSCRIPTIONAL REGULATOR, RRF2 FAMILY"/>
    <property type="match status" value="1"/>
</dbReference>
<dbReference type="Pfam" id="PF02082">
    <property type="entry name" value="Rrf2"/>
    <property type="match status" value="1"/>
</dbReference>
<dbReference type="SUPFAM" id="SSF46785">
    <property type="entry name" value="Winged helix' DNA-binding domain"/>
    <property type="match status" value="1"/>
</dbReference>
<dbReference type="PROSITE" id="PS01332">
    <property type="entry name" value="HTH_RRF2_1"/>
    <property type="match status" value="1"/>
</dbReference>
<dbReference type="PROSITE" id="PS51197">
    <property type="entry name" value="HTH_RRF2_2"/>
    <property type="match status" value="1"/>
</dbReference>
<comment type="function">
    <text evidence="1">Regulates the transcription of several operons and genes involved in the biogenesis of Fe-S clusters and Fe-S-containing proteins.</text>
</comment>
<comment type="cofactor">
    <cofactor evidence="1">
        <name>[2Fe-2S] cluster</name>
        <dbReference type="ChEBI" id="CHEBI:190135"/>
    </cofactor>
    <text evidence="1">Binds 1 [2Fe-2S] cluster.</text>
</comment>
<gene>
    <name evidence="1" type="primary">iscR</name>
    <name type="ordered locus">EcHS_A2682</name>
</gene>
<feature type="chain" id="PRO_1000085416" description="HTH-type transcriptional regulator IscR">
    <location>
        <begin position="1"/>
        <end position="162"/>
    </location>
</feature>
<feature type="domain" description="HTH rrf2-type" evidence="1">
    <location>
        <begin position="2"/>
        <end position="131"/>
    </location>
</feature>
<feature type="DNA-binding region" description="H-T-H motif" evidence="1">
    <location>
        <begin position="28"/>
        <end position="51"/>
    </location>
</feature>
<feature type="binding site" evidence="1">
    <location>
        <position position="92"/>
    </location>
    <ligand>
        <name>[2Fe-2S] cluster</name>
        <dbReference type="ChEBI" id="CHEBI:190135"/>
    </ligand>
</feature>
<feature type="binding site" evidence="1">
    <location>
        <position position="98"/>
    </location>
    <ligand>
        <name>[2Fe-2S] cluster</name>
        <dbReference type="ChEBI" id="CHEBI:190135"/>
    </ligand>
</feature>
<feature type="binding site" evidence="1">
    <location>
        <position position="104"/>
    </location>
    <ligand>
        <name>[2Fe-2S] cluster</name>
        <dbReference type="ChEBI" id="CHEBI:190135"/>
    </ligand>
</feature>